<evidence type="ECO:0000255" key="1">
    <source>
        <dbReference type="HAMAP-Rule" id="MF_04079"/>
    </source>
</evidence>
<evidence type="ECO:0000256" key="2">
    <source>
        <dbReference type="SAM" id="MobiDB-lite"/>
    </source>
</evidence>
<evidence type="ECO:0000305" key="3"/>
<gene>
    <name evidence="1" type="primary">tat</name>
</gene>
<reference key="1">
    <citation type="journal article" date="1999" name="AIDS Res. Hum. Retroviruses">
        <title>Virtually full-length sequences of HIV type 1 subtype J reference strains.</title>
        <authorList>
            <person name="Laukkanen T."/>
            <person name="Albert J."/>
            <person name="Liitsola K."/>
            <person name="Green S.D."/>
            <person name="Carr J.K."/>
            <person name="Leitner T."/>
            <person name="McCutchan F.E."/>
            <person name="Salminen M.O."/>
        </authorList>
    </citation>
    <scope>NUCLEOTIDE SEQUENCE [GENOMIC DNA]</scope>
</reference>
<reference key="2">
    <citation type="journal article" date="2005" name="Microbes Infect.">
        <title>Decoding Tat: the biology of HIV Tat posttranslational modifications.</title>
        <authorList>
            <person name="Hetzer C."/>
            <person name="Dormeyer W."/>
            <person name="Schnolzer M."/>
            <person name="Ott M."/>
        </authorList>
    </citation>
    <scope>REVIEW</scope>
    <scope>ALTERNATIVE SPLICING</scope>
</reference>
<reference key="3">
    <citation type="journal article" date="2006" name="Front. Biosci.">
        <title>The multiple functions of HIV-1 Tat: proliferation versus apoptosis.</title>
        <authorList>
            <person name="Peruzzi F."/>
        </authorList>
    </citation>
    <scope>REVIEW</scope>
</reference>
<reference key="4">
    <citation type="journal article" date="2006" name="Microbes Infect.">
        <title>HIV tat and neurotoxicity.</title>
        <authorList>
            <person name="King J.E."/>
            <person name="Eugenin E.A."/>
            <person name="Buckner C.M."/>
            <person name="Berman J.W."/>
        </authorList>
    </citation>
    <scope>REVIEW</scope>
</reference>
<name>TAT_HV1S9</name>
<organism>
    <name type="scientific">Human immunodeficiency virus type 1 group M subtype J (isolate SE9173)</name>
    <name type="common">HIV-1</name>
    <dbReference type="NCBI Taxonomy" id="388904"/>
    <lineage>
        <taxon>Viruses</taxon>
        <taxon>Riboviria</taxon>
        <taxon>Pararnavirae</taxon>
        <taxon>Artverviricota</taxon>
        <taxon>Revtraviricetes</taxon>
        <taxon>Ortervirales</taxon>
        <taxon>Retroviridae</taxon>
        <taxon>Orthoretrovirinae</taxon>
        <taxon>Lentivirus</taxon>
        <taxon>Human immunodeficiency virus type 1</taxon>
    </lineage>
</organism>
<dbReference type="EMBL" id="AF082395">
    <property type="protein sequence ID" value="AAD17772.1"/>
    <property type="molecule type" value="Genomic_DNA"/>
</dbReference>
<dbReference type="SMR" id="Q9WC66"/>
<dbReference type="Proteomes" id="UP000123434">
    <property type="component" value="Segment"/>
</dbReference>
<dbReference type="GO" id="GO:0005576">
    <property type="term" value="C:extracellular region"/>
    <property type="evidence" value="ECO:0007669"/>
    <property type="project" value="UniProtKB-SubCell"/>
</dbReference>
<dbReference type="GO" id="GO:0030430">
    <property type="term" value="C:host cell cytoplasm"/>
    <property type="evidence" value="ECO:0007669"/>
    <property type="project" value="UniProtKB-SubCell"/>
</dbReference>
<dbReference type="GO" id="GO:0044196">
    <property type="term" value="C:host cell nucleolus"/>
    <property type="evidence" value="ECO:0007669"/>
    <property type="project" value="UniProtKB-SubCell"/>
</dbReference>
<dbReference type="GO" id="GO:0042805">
    <property type="term" value="F:actinin binding"/>
    <property type="evidence" value="ECO:0007669"/>
    <property type="project" value="UniProtKB-UniRule"/>
</dbReference>
<dbReference type="GO" id="GO:0030332">
    <property type="term" value="F:cyclin binding"/>
    <property type="evidence" value="ECO:0007669"/>
    <property type="project" value="UniProtKB-UniRule"/>
</dbReference>
<dbReference type="GO" id="GO:0046872">
    <property type="term" value="F:metal ion binding"/>
    <property type="evidence" value="ECO:0007669"/>
    <property type="project" value="UniProtKB-UniRule"/>
</dbReference>
<dbReference type="GO" id="GO:0019904">
    <property type="term" value="F:protein domain specific binding"/>
    <property type="evidence" value="ECO:0007669"/>
    <property type="project" value="UniProtKB-UniRule"/>
</dbReference>
<dbReference type="GO" id="GO:0004865">
    <property type="term" value="F:protein serine/threonine phosphatase inhibitor activity"/>
    <property type="evidence" value="ECO:0007669"/>
    <property type="project" value="UniProtKB-KW"/>
</dbReference>
<dbReference type="GO" id="GO:0001070">
    <property type="term" value="F:RNA-binding transcription regulator activity"/>
    <property type="evidence" value="ECO:0007669"/>
    <property type="project" value="UniProtKB-UniRule"/>
</dbReference>
<dbReference type="GO" id="GO:1990970">
    <property type="term" value="F:trans-activation response element binding"/>
    <property type="evidence" value="ECO:0007669"/>
    <property type="project" value="UniProtKB-UniRule"/>
</dbReference>
<dbReference type="GO" id="GO:0006351">
    <property type="term" value="P:DNA-templated transcription"/>
    <property type="evidence" value="ECO:0007669"/>
    <property type="project" value="UniProtKB-UniRule"/>
</dbReference>
<dbReference type="GO" id="GO:0032968">
    <property type="term" value="P:positive regulation of transcription elongation by RNA polymerase II"/>
    <property type="evidence" value="ECO:0007669"/>
    <property type="project" value="UniProtKB-UniRule"/>
</dbReference>
<dbReference type="GO" id="GO:0050434">
    <property type="term" value="P:positive regulation of viral transcription"/>
    <property type="evidence" value="ECO:0007669"/>
    <property type="project" value="UniProtKB-UniRule"/>
</dbReference>
<dbReference type="GO" id="GO:0039525">
    <property type="term" value="P:symbiont-mediated perturbation of host chromatin organization"/>
    <property type="evidence" value="ECO:0007669"/>
    <property type="project" value="UniProtKB-UniRule"/>
</dbReference>
<dbReference type="GO" id="GO:0052170">
    <property type="term" value="P:symbiont-mediated suppression of host innate immune response"/>
    <property type="evidence" value="ECO:0007669"/>
    <property type="project" value="UniProtKB-KW"/>
</dbReference>
<dbReference type="GO" id="GO:0039606">
    <property type="term" value="P:symbiont-mediated suppression of host translation initiation"/>
    <property type="evidence" value="ECO:0007669"/>
    <property type="project" value="UniProtKB-KW"/>
</dbReference>
<dbReference type="GO" id="GO:0039502">
    <property type="term" value="P:symbiont-mediated suppression of host type I interferon-mediated signaling pathway"/>
    <property type="evidence" value="ECO:0007669"/>
    <property type="project" value="UniProtKB-UniRule"/>
</dbReference>
<dbReference type="Gene3D" id="4.10.20.10">
    <property type="entry name" value="Tat domain"/>
    <property type="match status" value="1"/>
</dbReference>
<dbReference type="HAMAP" id="MF_04079">
    <property type="entry name" value="HIV_TAT"/>
    <property type="match status" value="1"/>
</dbReference>
<dbReference type="InterPro" id="IPR001831">
    <property type="entry name" value="IV_Tat"/>
</dbReference>
<dbReference type="InterPro" id="IPR036963">
    <property type="entry name" value="Tat_dom_sf"/>
</dbReference>
<dbReference type="Pfam" id="PF00539">
    <property type="entry name" value="Tat"/>
    <property type="match status" value="1"/>
</dbReference>
<dbReference type="PRINTS" id="PR00055">
    <property type="entry name" value="HIVTATDOMAIN"/>
</dbReference>
<keyword id="KW-0007">Acetylation</keyword>
<keyword id="KW-0010">Activator</keyword>
<keyword id="KW-0014">AIDS</keyword>
<keyword id="KW-0025">Alternative splicing</keyword>
<keyword id="KW-0053">Apoptosis</keyword>
<keyword id="KW-1035">Host cytoplasm</keyword>
<keyword id="KW-1048">Host nucleus</keyword>
<keyword id="KW-0945">Host-virus interaction</keyword>
<keyword id="KW-1090">Inhibition of host innate immune response by virus</keyword>
<keyword id="KW-1114">Inhibition of host interferon signaling pathway by virus</keyword>
<keyword id="KW-0922">Interferon antiviral system evasion</keyword>
<keyword id="KW-1017">Isopeptide bond</keyword>
<keyword id="KW-0479">Metal-binding</keyword>
<keyword id="KW-0488">Methylation</keyword>
<keyword id="KW-1122">Modulation of host chromatin by virus</keyword>
<keyword id="KW-1126">Modulation of host PP1 activity by virus</keyword>
<keyword id="KW-0597">Phosphoprotein</keyword>
<keyword id="KW-0694">RNA-binding</keyword>
<keyword id="KW-0964">Secreted</keyword>
<keyword id="KW-0804">Transcription</keyword>
<keyword id="KW-0805">Transcription regulation</keyword>
<keyword id="KW-0832">Ubl conjugation</keyword>
<keyword id="KW-0899">Viral immunoevasion</keyword>
<keyword id="KW-0862">Zinc</keyword>
<organismHost>
    <name type="scientific">Homo sapiens</name>
    <name type="common">Human</name>
    <dbReference type="NCBI Taxonomy" id="9606"/>
</organismHost>
<protein>
    <recommendedName>
        <fullName evidence="1">Protein Tat</fullName>
    </recommendedName>
    <alternativeName>
        <fullName evidence="1">Transactivating regulatory protein</fullName>
    </alternativeName>
</protein>
<sequence length="101" mass="11658">MEPVDPNREPWNHPGSQPKTACTNCYCKKCCYHCQVCFLQKGLGISYGRKKRRQRRSAPPGSKNHQDLIPEQPLFQTQRKPTGPEESKKEVESKAEPDRFD</sequence>
<comment type="function">
    <text evidence="1">Transcriptional activator that increases RNA Pol II processivity, thereby increasing the level of full-length viral transcripts. Recognizes a hairpin structure at the 5'-LTR of the nascent viral mRNAs referred to as the transactivation responsive RNA element (TAR) and recruits the cyclin T1-CDK9 complex (P-TEFb complex) that will in turn hyperphosphorylate the RNA polymerase II to allow efficient elongation. The CDK9 component of P-TEFb and other Tat-activated kinases hyperphosphorylate the C-terminus of RNA Pol II that becomes stabilized and much more processive. Other factors such as HTATSF1/Tat-SF1, SUPT5H/SPT5, and HTATIP2 are also important for Tat's function. Besides its effect on RNA Pol II processivity, Tat induces chromatin remodeling of proviral genes by recruiting the histone acetyltransferases (HATs) CREBBP, EP300 and PCAF to the chromatin. This also contributes to the increase in proviral transcription rate, especially when the provirus integrates in transcriptionally silent region of the host genome. To ensure maximal activation of the LTR, Tat mediates nuclear translocation of NF-kappa-B by interacting with host RELA. Through its interaction with host TBP, Tat may also modulate transcription initiation. Tat can reactivate a latently infected cell by penetrating in it and transactivating its LTR promoter. In the cytoplasm, Tat is thought to act as a translational activator of HIV-1 mRNAs.</text>
</comment>
<comment type="function">
    <text evidence="1">Extracellular circulating Tat can be endocytosed by surrounding uninfected cells via the binding to several surface receptors such as CD26, CXCR4, heparan sulfate proteoglycans (HSPG) or LDLR. Neurons are rarely infected, but they internalize Tat via their LDLR. Through its interaction with nuclear HATs, Tat is potentially able to control the acetylation-dependent cellular gene expression. Modulates the expression of many cellular genes involved in cell survival, proliferation or in coding for cytokines or cytokine receptors. Tat plays a role in T-cell and neurons apoptosis. Tat induced neurotoxicity and apoptosis probably contribute to neuroAIDS. Circulating Tat also acts as a chemokine-like and/or growth factor-like molecule that binds to specific receptors on the surface of the cells, affecting many cellular pathways. In the vascular system, Tat binds to ITGAV/ITGB3 and ITGA5/ITGB1 integrins dimers at the surface of endothelial cells and competes with bFGF for heparin-binding sites, leading to an excess of soluble bFGF.</text>
</comment>
<comment type="subunit">
    <text evidence="1">Interacts with host CCNT1. Associates with the P-TEFb complex composed at least of Tat, P-TEFb (CDK9 and CCNT1), TAR RNA, RNA Pol II. Recruits the HATs CREBBP, TAF1/TFIID, EP300, PCAF and GCN5L2. Interacts with host KAT5/Tip60; this interaction targets the latter to degradation. Interacts with the host deacetylase SIRT1. Interacts with host capping enzyme RNGTT; this interaction stimulates RNGTT. Binds to host KDR, and to the host integrins ITGAV/ITGB3 and ITGA5/ITGB1. Interacts with host KPNB1/importin beta-1 without previous binding to KPNA1/importin alpha-1. Interacts with EIF2AK2. Interacts with host nucleosome assembly protein NAP1L1; this interaction may be required for the transport of Tat within the nucleus, since the two proteins interact at the nuclear rim. Interacts with host C1QBP/SF2P32; this interaction involves lysine-acetylated Tat. Interacts with the host chemokine receptors CCR2, CCR3 and CXCR4. Interacts with host DPP4/CD26; this interaction may trigger an anti-proliferative effect. Interacts with host LDLR. Interacts with the host extracellular matrix metalloproteinase MMP1. Interacts with host PRMT6; this interaction mediates Tat's methylation. Interacts with, and is ubiquitinated by MDM2/Hdm2. Interacts with host PSMC3 and HTATIP2. Interacts with STAB1; this interaction may overcome SATB1-mediated repression of IL2 and IL2RA (interleukin) in T cells by binding to the same domain than HDAC1. Interacts (when acetylated) with human CDK13, thereby increasing HIV-1 mRNA splicing and promoting the production of the doubly spliced HIV-1 protein Nef. Interacts with host TBP; this interaction modulates the activity of transcriptional pre-initiation complex. Interacts with host RELA. Interacts with host PLSCR1; this interaction negatively regulates Tat transactivation activity by altering its subcellular distribution.</text>
</comment>
<comment type="subcellular location">
    <subcellularLocation>
        <location evidence="1">Host nucleus</location>
        <location evidence="1">Host nucleolus</location>
    </subcellularLocation>
    <subcellularLocation>
        <location evidence="1">Host cytoplasm</location>
    </subcellularLocation>
    <subcellularLocation>
        <location evidence="1">Secreted</location>
    </subcellularLocation>
    <text evidence="1">Probably localizes to both nuclear and nucleolar compartments. Nuclear localization is mediated through the interaction of the nuclear localization signal with importin KPNB1. Secretion occurs through a Golgi-independent pathway. Tat is released from infected cells to the extracellular space where it remains associated to the cell membrane, or is secreted into the cerebrospinal fluid and sera. Extracellular Tat can be endocytosed by surrounding uninfected cells via binding to several receptors depending on the cell type.</text>
</comment>
<comment type="alternative products">
    <event type="alternative splicing"/>
    <isoform>
        <id>Q9WC66-1</id>
        <name>Long</name>
        <sequence type="displayed"/>
    </isoform>
    <isoform>
        <id>Q9WC66-2</id>
        <name>Short</name>
        <sequence type="described" ref="VSP_022425"/>
    </isoform>
</comment>
<comment type="domain">
    <text evidence="1">The cell attachment site mediates the interaction with ITGAV/ITGB3 and ITGA5/ITGB1 integrins, leading to vascular cell migration and invasion. This interaction also provides endothelial cells with the adhesion signal they require to grow in response to mitogens.</text>
</comment>
<comment type="domain">
    <text evidence="1">The Cys-rich region may bind 2 zinc ions. This region is involved in binding to KAT5.</text>
</comment>
<comment type="domain">
    <text evidence="1">The transactivation domain mediates the interaction with CCNT1, GCN5L2, and MDM2.</text>
</comment>
<comment type="domain">
    <text evidence="1">The Arg-rich RNA-binding region binds the TAR RNA. This region also mediates the nuclear localization through direct binding to KPNB1 and is involved in Tat's transfer across cell membranes (protein transduction). The same region is required for the interaction with EP300, PCAF, EIF2AK2 and KDR.</text>
</comment>
<comment type="PTM">
    <text evidence="1">Asymmetrical arginine methylation by host PRMT6 seems to diminish the transactivation capacity of Tat and affects the interaction with host CCNT1.</text>
</comment>
<comment type="PTM">
    <text evidence="1">Acetylation by EP300, CREBBP, GCN5L2/GCN5 and PCAF regulates the transactivation activity of Tat. EP300-mediated acetylation of Lys-50 promotes dissociation of Tat from the TAR RNA through the competitive binding to PCAF's bromodomain. In addition, the non-acetylated Tat's N-terminus can also interact with PCAF. PCAF-mediated acetylation of Lys-28 enhances Tat's binding to CCNT1. Lys-50 is deacetylated by SIRT1.</text>
</comment>
<comment type="PTM">
    <text evidence="1">Polyubiquitination by host MDM2 does not target Tat to degradation, but activates its transactivation function and fosters interaction with CCNT1 and TAR RNA.</text>
</comment>
<comment type="PTM">
    <text evidence="1">Phosphorylated by EIF2AK2 on serine and threonine residues adjacent to the basic region important for TAR RNA binding and function. Phosphorylation of Tat by EIF2AK2 is dependent on the prior activation of EIF2AK2 by dsRNA.</text>
</comment>
<comment type="miscellaneous">
    <text evidence="1">HIV-1 lineages are divided in three main groups, M (for Major), O (for Outlier), and N (for New, or Non-M, Non-O). The vast majority of strains found worldwide belong to the group M. Group O seems to be endemic to and largely confined to Cameroon and neighboring countries in West Central Africa, where these viruses represent a small minority of HIV-1 strains. The group N is represented by a limited number of isolates from Cameroonian persons. The group M is further subdivided in 9 clades or subtypes (A to D, F to H, J and K).</text>
</comment>
<comment type="miscellaneous">
    <molecule>Isoform Short</molecule>
    <text evidence="3">Expressed in the late stage of the infection cycle, when unspliced viral RNAs are exported to the cytoplasm by the viral Rev protein.</text>
</comment>
<comment type="similarity">
    <text evidence="1">Belongs to the lentiviruses Tat family.</text>
</comment>
<accession>Q9WC66</accession>
<proteinExistence type="inferred from homology"/>
<feature type="chain" id="PRO_0000244856" description="Protein Tat">
    <location>
        <begin position="1"/>
        <end position="101"/>
    </location>
</feature>
<feature type="region of interest" description="Transactivation" evidence="1">
    <location>
        <begin position="1"/>
        <end position="48"/>
    </location>
</feature>
<feature type="region of interest" description="Interaction with human CREBBP" evidence="1">
    <location>
        <begin position="1"/>
        <end position="24"/>
    </location>
</feature>
<feature type="region of interest" description="Cysteine-rich" evidence="1">
    <location>
        <begin position="22"/>
        <end position="37"/>
    </location>
</feature>
<feature type="region of interest" description="Core" evidence="1">
    <location>
        <begin position="38"/>
        <end position="48"/>
    </location>
</feature>
<feature type="region of interest" description="Disordered" evidence="2">
    <location>
        <begin position="48"/>
        <end position="101"/>
    </location>
</feature>
<feature type="region of interest" description="Interaction with the host capping enzyme RNGTT" evidence="1">
    <location>
        <begin position="49"/>
        <end position="86"/>
    </location>
</feature>
<feature type="short sequence motif" description="Nuclear localization signal, RNA-binding (TAR), and protein transduction" evidence="1">
    <location>
        <begin position="49"/>
        <end position="57"/>
    </location>
</feature>
<feature type="compositionally biased region" description="Basic and acidic residues" evidence="2">
    <location>
        <begin position="82"/>
        <end position="101"/>
    </location>
</feature>
<feature type="binding site" evidence="1">
    <location>
        <position position="22"/>
    </location>
    <ligand>
        <name>Zn(2+)</name>
        <dbReference type="ChEBI" id="CHEBI:29105"/>
        <label>1</label>
    </ligand>
</feature>
<feature type="binding site" evidence="1">
    <location>
        <position position="25"/>
    </location>
    <ligand>
        <name>Zn(2+)</name>
        <dbReference type="ChEBI" id="CHEBI:29105"/>
        <label>2</label>
    </ligand>
</feature>
<feature type="binding site" evidence="1">
    <location>
        <position position="27"/>
    </location>
    <ligand>
        <name>Zn(2+)</name>
        <dbReference type="ChEBI" id="CHEBI:29105"/>
        <label>2</label>
    </ligand>
</feature>
<feature type="binding site" evidence="1">
    <location>
        <position position="30"/>
    </location>
    <ligand>
        <name>Zn(2+)</name>
        <dbReference type="ChEBI" id="CHEBI:29105"/>
        <label>2</label>
    </ligand>
</feature>
<feature type="binding site" evidence="1">
    <location>
        <position position="33"/>
    </location>
    <ligand>
        <name>Zn(2+)</name>
        <dbReference type="ChEBI" id="CHEBI:29105"/>
        <label>1</label>
    </ligand>
</feature>
<feature type="binding site" evidence="1">
    <location>
        <position position="34"/>
    </location>
    <ligand>
        <name>Zn(2+)</name>
        <dbReference type="ChEBI" id="CHEBI:29105"/>
        <label>1</label>
    </ligand>
</feature>
<feature type="binding site" evidence="1">
    <location>
        <position position="37"/>
    </location>
    <ligand>
        <name>Zn(2+)</name>
        <dbReference type="ChEBI" id="CHEBI:29105"/>
        <label>1</label>
    </ligand>
</feature>
<feature type="site" description="Essential for Tat translocation through the endosomal membrane" evidence="1">
    <location>
        <position position="11"/>
    </location>
</feature>
<feature type="modified residue" description="N6-acetyllysine; by host PCAF" evidence="1">
    <location>
        <position position="28"/>
    </location>
</feature>
<feature type="modified residue" description="N6-acetyllysine; by host EP300 and GCN5L2" evidence="1">
    <location>
        <position position="50"/>
    </location>
</feature>
<feature type="modified residue" description="N6-acetyllysine; by host EP300 and GCN5L2" evidence="1">
    <location>
        <position position="51"/>
    </location>
</feature>
<feature type="modified residue" description="Asymmetric dimethylarginine; by host PRMT6" evidence="1">
    <location>
        <position position="52"/>
    </location>
</feature>
<feature type="modified residue" description="Asymmetric dimethylarginine; by host PRMT6" evidence="1">
    <location>
        <position position="53"/>
    </location>
</feature>
<feature type="splice variant" id="VSP_022425" description="In isoform Short.">
    <location>
        <begin position="73"/>
        <end position="101"/>
    </location>
</feature>